<comment type="function">
    <text evidence="1">Methylates ribosomal protein L11.</text>
</comment>
<comment type="catalytic activity">
    <reaction evidence="1">
        <text>L-lysyl-[protein] + 3 S-adenosyl-L-methionine = N(6),N(6),N(6)-trimethyl-L-lysyl-[protein] + 3 S-adenosyl-L-homocysteine + 3 H(+)</text>
        <dbReference type="Rhea" id="RHEA:54192"/>
        <dbReference type="Rhea" id="RHEA-COMP:9752"/>
        <dbReference type="Rhea" id="RHEA-COMP:13826"/>
        <dbReference type="ChEBI" id="CHEBI:15378"/>
        <dbReference type="ChEBI" id="CHEBI:29969"/>
        <dbReference type="ChEBI" id="CHEBI:57856"/>
        <dbReference type="ChEBI" id="CHEBI:59789"/>
        <dbReference type="ChEBI" id="CHEBI:61961"/>
    </reaction>
</comment>
<comment type="subcellular location">
    <subcellularLocation>
        <location evidence="1">Cytoplasm</location>
    </subcellularLocation>
</comment>
<comment type="similarity">
    <text evidence="1">Belongs to the methyltransferase superfamily. PrmA family.</text>
</comment>
<reference key="1">
    <citation type="journal article" date="2011" name="J. Bacteriol.">
        <title>Complete genome sequence of the Thermophilic Bacterium Exiguobacterium sp. AT1b.</title>
        <authorList>
            <person name="Vishnivetskaya T.A."/>
            <person name="Lucas S."/>
            <person name="Copeland A."/>
            <person name="Lapidus A."/>
            <person name="Glavina del Rio T."/>
            <person name="Dalin E."/>
            <person name="Tice H."/>
            <person name="Bruce D.C."/>
            <person name="Goodwin L.A."/>
            <person name="Pitluck S."/>
            <person name="Saunders E."/>
            <person name="Brettin T."/>
            <person name="Detter C."/>
            <person name="Han C."/>
            <person name="Larimer F."/>
            <person name="Land M.L."/>
            <person name="Hauser L.J."/>
            <person name="Kyrpides N.C."/>
            <person name="Ovchinnikova G."/>
            <person name="Kathariou S."/>
            <person name="Ramaley R.F."/>
            <person name="Rodrigues D.F."/>
            <person name="Hendrix C."/>
            <person name="Richardson P."/>
            <person name="Tiedje J.M."/>
        </authorList>
    </citation>
    <scope>NUCLEOTIDE SEQUENCE [LARGE SCALE GENOMIC DNA]</scope>
    <source>
        <strain>ATCC BAA-1283 / AT1b</strain>
    </source>
</reference>
<feature type="chain" id="PRO_1000212750" description="Ribosomal protein L11 methyltransferase">
    <location>
        <begin position="1"/>
        <end position="312"/>
    </location>
</feature>
<feature type="binding site" evidence="1">
    <location>
        <position position="162"/>
    </location>
    <ligand>
        <name>S-adenosyl-L-methionine</name>
        <dbReference type="ChEBI" id="CHEBI:59789"/>
    </ligand>
</feature>
<feature type="binding site" evidence="1">
    <location>
        <position position="183"/>
    </location>
    <ligand>
        <name>S-adenosyl-L-methionine</name>
        <dbReference type="ChEBI" id="CHEBI:59789"/>
    </ligand>
</feature>
<feature type="binding site" evidence="1">
    <location>
        <position position="205"/>
    </location>
    <ligand>
        <name>S-adenosyl-L-methionine</name>
        <dbReference type="ChEBI" id="CHEBI:59789"/>
    </ligand>
</feature>
<feature type="binding site" evidence="1">
    <location>
        <position position="248"/>
    </location>
    <ligand>
        <name>S-adenosyl-L-methionine</name>
        <dbReference type="ChEBI" id="CHEBI:59789"/>
    </ligand>
</feature>
<protein>
    <recommendedName>
        <fullName evidence="1">Ribosomal protein L11 methyltransferase</fullName>
        <shortName evidence="1">L11 Mtase</shortName>
        <ecNumber evidence="1">2.1.1.-</ecNumber>
    </recommendedName>
</protein>
<gene>
    <name evidence="1" type="primary">prmA</name>
    <name type="ordered locus">EAT1b_0614</name>
</gene>
<keyword id="KW-0963">Cytoplasm</keyword>
<keyword id="KW-0489">Methyltransferase</keyword>
<keyword id="KW-0949">S-adenosyl-L-methionine</keyword>
<keyword id="KW-0808">Transferase</keyword>
<dbReference type="EC" id="2.1.1.-" evidence="1"/>
<dbReference type="EMBL" id="CP001615">
    <property type="protein sequence ID" value="ACQ69545.1"/>
    <property type="molecule type" value="Genomic_DNA"/>
</dbReference>
<dbReference type="RefSeq" id="WP_012726664.1">
    <property type="nucleotide sequence ID" value="NC_012673.1"/>
</dbReference>
<dbReference type="SMR" id="C4L423"/>
<dbReference type="STRING" id="360911.EAT1b_0614"/>
<dbReference type="KEGG" id="eat:EAT1b_0614"/>
<dbReference type="eggNOG" id="COG2264">
    <property type="taxonomic scope" value="Bacteria"/>
</dbReference>
<dbReference type="HOGENOM" id="CLU_049382_0_1_9"/>
<dbReference type="OrthoDB" id="9785995at2"/>
<dbReference type="Proteomes" id="UP000000716">
    <property type="component" value="Chromosome"/>
</dbReference>
<dbReference type="GO" id="GO:0005737">
    <property type="term" value="C:cytoplasm"/>
    <property type="evidence" value="ECO:0007669"/>
    <property type="project" value="UniProtKB-SubCell"/>
</dbReference>
<dbReference type="GO" id="GO:0016279">
    <property type="term" value="F:protein-lysine N-methyltransferase activity"/>
    <property type="evidence" value="ECO:0007669"/>
    <property type="project" value="RHEA"/>
</dbReference>
<dbReference type="GO" id="GO:0032259">
    <property type="term" value="P:methylation"/>
    <property type="evidence" value="ECO:0007669"/>
    <property type="project" value="UniProtKB-KW"/>
</dbReference>
<dbReference type="CDD" id="cd02440">
    <property type="entry name" value="AdoMet_MTases"/>
    <property type="match status" value="1"/>
</dbReference>
<dbReference type="Gene3D" id="3.40.50.150">
    <property type="entry name" value="Vaccinia Virus protein VP39"/>
    <property type="match status" value="1"/>
</dbReference>
<dbReference type="HAMAP" id="MF_00735">
    <property type="entry name" value="Methyltr_PrmA"/>
    <property type="match status" value="1"/>
</dbReference>
<dbReference type="InterPro" id="IPR050078">
    <property type="entry name" value="Ribosomal_L11_MeTrfase_PrmA"/>
</dbReference>
<dbReference type="InterPro" id="IPR004498">
    <property type="entry name" value="Ribosomal_PrmA_MeTrfase"/>
</dbReference>
<dbReference type="InterPro" id="IPR029063">
    <property type="entry name" value="SAM-dependent_MTases_sf"/>
</dbReference>
<dbReference type="NCBIfam" id="TIGR00406">
    <property type="entry name" value="prmA"/>
    <property type="match status" value="1"/>
</dbReference>
<dbReference type="PANTHER" id="PTHR43648">
    <property type="entry name" value="ELECTRON TRANSFER FLAVOPROTEIN BETA SUBUNIT LYSINE METHYLTRANSFERASE"/>
    <property type="match status" value="1"/>
</dbReference>
<dbReference type="PANTHER" id="PTHR43648:SF1">
    <property type="entry name" value="ELECTRON TRANSFER FLAVOPROTEIN BETA SUBUNIT LYSINE METHYLTRANSFERASE"/>
    <property type="match status" value="1"/>
</dbReference>
<dbReference type="Pfam" id="PF06325">
    <property type="entry name" value="PrmA"/>
    <property type="match status" value="1"/>
</dbReference>
<dbReference type="PIRSF" id="PIRSF000401">
    <property type="entry name" value="RPL11_MTase"/>
    <property type="match status" value="1"/>
</dbReference>
<dbReference type="SUPFAM" id="SSF53335">
    <property type="entry name" value="S-adenosyl-L-methionine-dependent methyltransferases"/>
    <property type="match status" value="1"/>
</dbReference>
<evidence type="ECO:0000255" key="1">
    <source>
        <dbReference type="HAMAP-Rule" id="MF_00735"/>
    </source>
</evidence>
<sequence length="312" mass="34123">MKWSEICVHTTQLAVEAVSNLLHEVGAQGVVIEDVEDFDRMMAEDHFGEIWDVSDRETYPTSGVHVKAYVPASGDFQDLLSNLKKEIERLRTMLDIGSGDVTVAEIDEEDWAHSWKQYYKPVKISQQLTIVPLWEEYTPQPEENVILLDPGMAFGTGTHPTTMLCIQAIENYIREGDHVIDVGTGSGVLSIAAAKLGAASVKALDLDSVAVESARQNVETNGVGELVQVDTGDLLKGVEGEYDLVVANILADVILLFIEDAYARTKSGGRFITSGIIGEKRAEVTNALVAAGFEIEETRVMEDWVAIIAKKG</sequence>
<accession>C4L423</accession>
<organism>
    <name type="scientific">Exiguobacterium sp. (strain ATCC BAA-1283 / AT1b)</name>
    <dbReference type="NCBI Taxonomy" id="360911"/>
    <lineage>
        <taxon>Bacteria</taxon>
        <taxon>Bacillati</taxon>
        <taxon>Bacillota</taxon>
        <taxon>Bacilli</taxon>
        <taxon>Bacillales</taxon>
        <taxon>Bacillales Family XII. Incertae Sedis</taxon>
        <taxon>Exiguobacterium</taxon>
    </lineage>
</organism>
<proteinExistence type="inferred from homology"/>
<name>PRMA_EXISA</name>